<feature type="chain" id="PRO_0000102700" description="Ribosome-binding factor A">
    <location>
        <begin position="1"/>
        <end position="123"/>
    </location>
</feature>
<reference key="1">
    <citation type="journal article" date="2000" name="Nature">
        <title>Complete DNA sequence of a serogroup A strain of Neisseria meningitidis Z2491.</title>
        <authorList>
            <person name="Parkhill J."/>
            <person name="Achtman M."/>
            <person name="James K.D."/>
            <person name="Bentley S.D."/>
            <person name="Churcher C.M."/>
            <person name="Klee S.R."/>
            <person name="Morelli G."/>
            <person name="Basham D."/>
            <person name="Brown D."/>
            <person name="Chillingworth T."/>
            <person name="Davies R.M."/>
            <person name="Davis P."/>
            <person name="Devlin K."/>
            <person name="Feltwell T."/>
            <person name="Hamlin N."/>
            <person name="Holroyd S."/>
            <person name="Jagels K."/>
            <person name="Leather S."/>
            <person name="Moule S."/>
            <person name="Mungall K.L."/>
            <person name="Quail M.A."/>
            <person name="Rajandream M.A."/>
            <person name="Rutherford K.M."/>
            <person name="Simmonds M."/>
            <person name="Skelton J."/>
            <person name="Whitehead S."/>
            <person name="Spratt B.G."/>
            <person name="Barrell B.G."/>
        </authorList>
    </citation>
    <scope>NUCLEOTIDE SEQUENCE [LARGE SCALE GENOMIC DNA]</scope>
    <source>
        <strain>DSM 15465 / Z2491</strain>
    </source>
</reference>
<proteinExistence type="inferred from homology"/>
<sequence>MRKPQRGYARQDRVKEQIMRELAELVRTGLKDPRAGFITVNEVEVTRDYSHATVFYTVLNQDAREITEEVLEHARGHLRSELAKRIKLFKIPELHFKYDESLERGLNLSALIDQVAAEKPVED</sequence>
<evidence type="ECO:0000255" key="1">
    <source>
        <dbReference type="HAMAP-Rule" id="MF_00003"/>
    </source>
</evidence>
<name>RBFA_NEIMA</name>
<accession>Q9JTX7</accession>
<accession>A1ISH4</accession>
<gene>
    <name evidence="1" type="primary">rbfA</name>
    <name type="ordered locus">NMA1586</name>
</gene>
<protein>
    <recommendedName>
        <fullName evidence="1">Ribosome-binding factor A</fullName>
    </recommendedName>
</protein>
<comment type="function">
    <text evidence="1">One of several proteins that assist in the late maturation steps of the functional core of the 30S ribosomal subunit. Associates with free 30S ribosomal subunits (but not with 30S subunits that are part of 70S ribosomes or polysomes). Required for efficient processing of 16S rRNA. May interact with the 5'-terminal helix region of 16S rRNA.</text>
</comment>
<comment type="subunit">
    <text evidence="1">Monomer. Binds 30S ribosomal subunits, but not 50S ribosomal subunits or 70S ribosomes.</text>
</comment>
<comment type="subcellular location">
    <subcellularLocation>
        <location evidence="1">Cytoplasm</location>
    </subcellularLocation>
</comment>
<comment type="similarity">
    <text evidence="1">Belongs to the RbfA family.</text>
</comment>
<dbReference type="EMBL" id="AL157959">
    <property type="protein sequence ID" value="CAM08730.1"/>
    <property type="molecule type" value="Genomic_DNA"/>
</dbReference>
<dbReference type="PIR" id="E81851">
    <property type="entry name" value="E81851"/>
</dbReference>
<dbReference type="RefSeq" id="WP_002219120.1">
    <property type="nucleotide sequence ID" value="NC_003116.1"/>
</dbReference>
<dbReference type="SMR" id="Q9JTX7"/>
<dbReference type="EnsemblBacteria" id="CAM08730">
    <property type="protein sequence ID" value="CAM08730"/>
    <property type="gene ID" value="NMA1586"/>
</dbReference>
<dbReference type="GeneID" id="93387990"/>
<dbReference type="KEGG" id="nma:NMA1586"/>
<dbReference type="HOGENOM" id="CLU_089475_5_0_4"/>
<dbReference type="Proteomes" id="UP000000626">
    <property type="component" value="Chromosome"/>
</dbReference>
<dbReference type="GO" id="GO:0005829">
    <property type="term" value="C:cytosol"/>
    <property type="evidence" value="ECO:0007669"/>
    <property type="project" value="TreeGrafter"/>
</dbReference>
<dbReference type="GO" id="GO:0043024">
    <property type="term" value="F:ribosomal small subunit binding"/>
    <property type="evidence" value="ECO:0007669"/>
    <property type="project" value="TreeGrafter"/>
</dbReference>
<dbReference type="GO" id="GO:0030490">
    <property type="term" value="P:maturation of SSU-rRNA"/>
    <property type="evidence" value="ECO:0007669"/>
    <property type="project" value="UniProtKB-UniRule"/>
</dbReference>
<dbReference type="Gene3D" id="3.30.300.20">
    <property type="match status" value="1"/>
</dbReference>
<dbReference type="HAMAP" id="MF_00003">
    <property type="entry name" value="RbfA"/>
    <property type="match status" value="1"/>
</dbReference>
<dbReference type="InterPro" id="IPR015946">
    <property type="entry name" value="KH_dom-like_a/b"/>
</dbReference>
<dbReference type="InterPro" id="IPR000238">
    <property type="entry name" value="RbfA"/>
</dbReference>
<dbReference type="InterPro" id="IPR023799">
    <property type="entry name" value="RbfA_dom_sf"/>
</dbReference>
<dbReference type="InterPro" id="IPR020053">
    <property type="entry name" value="Ribosome-bd_factorA_CS"/>
</dbReference>
<dbReference type="NCBIfam" id="TIGR00082">
    <property type="entry name" value="rbfA"/>
    <property type="match status" value="1"/>
</dbReference>
<dbReference type="PANTHER" id="PTHR33515">
    <property type="entry name" value="RIBOSOME-BINDING FACTOR A, CHLOROPLASTIC-RELATED"/>
    <property type="match status" value="1"/>
</dbReference>
<dbReference type="PANTHER" id="PTHR33515:SF1">
    <property type="entry name" value="RIBOSOME-BINDING FACTOR A, CHLOROPLASTIC-RELATED"/>
    <property type="match status" value="1"/>
</dbReference>
<dbReference type="Pfam" id="PF02033">
    <property type="entry name" value="RBFA"/>
    <property type="match status" value="1"/>
</dbReference>
<dbReference type="SUPFAM" id="SSF89919">
    <property type="entry name" value="Ribosome-binding factor A, RbfA"/>
    <property type="match status" value="1"/>
</dbReference>
<dbReference type="PROSITE" id="PS01319">
    <property type="entry name" value="RBFA"/>
    <property type="match status" value="1"/>
</dbReference>
<organism>
    <name type="scientific">Neisseria meningitidis serogroup A / serotype 4A (strain DSM 15465 / Z2491)</name>
    <dbReference type="NCBI Taxonomy" id="122587"/>
    <lineage>
        <taxon>Bacteria</taxon>
        <taxon>Pseudomonadati</taxon>
        <taxon>Pseudomonadota</taxon>
        <taxon>Betaproteobacteria</taxon>
        <taxon>Neisseriales</taxon>
        <taxon>Neisseriaceae</taxon>
        <taxon>Neisseria</taxon>
    </lineage>
</organism>
<keyword id="KW-0963">Cytoplasm</keyword>
<keyword id="KW-0690">Ribosome biogenesis</keyword>